<comment type="function">
    <text evidence="1">Catalyzes the reversible conversion of 3-phosphohydroxypyruvate to phosphoserine and of 3-hydroxy-2-oxo-4-phosphonooxybutanoate to phosphohydroxythreonine.</text>
</comment>
<comment type="catalytic activity">
    <reaction evidence="1">
        <text>O-phospho-L-serine + 2-oxoglutarate = 3-phosphooxypyruvate + L-glutamate</text>
        <dbReference type="Rhea" id="RHEA:14329"/>
        <dbReference type="ChEBI" id="CHEBI:16810"/>
        <dbReference type="ChEBI" id="CHEBI:18110"/>
        <dbReference type="ChEBI" id="CHEBI:29985"/>
        <dbReference type="ChEBI" id="CHEBI:57524"/>
        <dbReference type="EC" id="2.6.1.52"/>
    </reaction>
</comment>
<comment type="catalytic activity">
    <reaction evidence="1">
        <text>4-(phosphooxy)-L-threonine + 2-oxoglutarate = (R)-3-hydroxy-2-oxo-4-phosphooxybutanoate + L-glutamate</text>
        <dbReference type="Rhea" id="RHEA:16573"/>
        <dbReference type="ChEBI" id="CHEBI:16810"/>
        <dbReference type="ChEBI" id="CHEBI:29985"/>
        <dbReference type="ChEBI" id="CHEBI:58452"/>
        <dbReference type="ChEBI" id="CHEBI:58538"/>
        <dbReference type="EC" id="2.6.1.52"/>
    </reaction>
</comment>
<comment type="cofactor">
    <cofactor evidence="1">
        <name>pyridoxal 5'-phosphate</name>
        <dbReference type="ChEBI" id="CHEBI:597326"/>
    </cofactor>
    <text evidence="1">Binds 1 pyridoxal phosphate per subunit.</text>
</comment>
<comment type="pathway">
    <text evidence="1">Amino-acid biosynthesis; L-serine biosynthesis; L-serine from 3-phospho-D-glycerate: step 2/3.</text>
</comment>
<comment type="pathway">
    <text evidence="1">Cofactor biosynthesis; pyridoxine 5'-phosphate biosynthesis; pyridoxine 5'-phosphate from D-erythrose 4-phosphate: step 3/5.</text>
</comment>
<comment type="subunit">
    <text evidence="1">Homodimer.</text>
</comment>
<comment type="subcellular location">
    <subcellularLocation>
        <location evidence="1">Cytoplasm</location>
    </subcellularLocation>
</comment>
<comment type="similarity">
    <text evidence="1">Belongs to the class-V pyridoxal-phosphate-dependent aminotransferase family. SerC subfamily.</text>
</comment>
<reference key="1">
    <citation type="journal article" date="1990" name="Nucleic Acids Res.">
        <title>Nucleotide sequence of the Salmonella serC gene.</title>
        <authorList>
            <person name="Griffin H.G."/>
        </authorList>
    </citation>
    <scope>NUCLEOTIDE SEQUENCE [GENOMIC DNA]</scope>
    <source>
        <strain>9</strain>
    </source>
</reference>
<reference key="2">
    <citation type="journal article" date="1991" name="J. Gen. Microbiol.">
        <title>Cloning and DNA sequence analysis of the serC-aroA operon from Salmonella gallinarum; evolutionary relationships between the prokaryotic and eukaryotic aroA-encoded enzymes.</title>
        <authorList>
            <person name="Griffin H.G."/>
            <person name="Griffin A.M."/>
        </authorList>
    </citation>
    <scope>NUCLEOTIDE SEQUENCE [GENOMIC DNA]</scope>
    <source>
        <strain>9</strain>
    </source>
</reference>
<dbReference type="EC" id="2.6.1.52" evidence="1"/>
<dbReference type="EMBL" id="X53381">
    <property type="protein sequence ID" value="CAA37461.1"/>
    <property type="molecule type" value="Genomic_DNA"/>
</dbReference>
<dbReference type="EMBL" id="M62801">
    <property type="protein sequence ID" value="AAA27222.1"/>
    <property type="molecule type" value="Genomic_DNA"/>
</dbReference>
<dbReference type="PIR" id="S10512">
    <property type="entry name" value="S10512"/>
</dbReference>
<dbReference type="RefSeq" id="WP_000079590.1">
    <property type="nucleotide sequence ID" value="NZ_RHEL01000004.1"/>
</dbReference>
<dbReference type="SMR" id="P62676"/>
<dbReference type="PATRIC" id="fig|594.9.peg.3157"/>
<dbReference type="OMA" id="AFVYFCD"/>
<dbReference type="UniPathway" id="UPA00135">
    <property type="reaction ID" value="UER00197"/>
</dbReference>
<dbReference type="UniPathway" id="UPA00244">
    <property type="reaction ID" value="UER00311"/>
</dbReference>
<dbReference type="GO" id="GO:0005737">
    <property type="term" value="C:cytoplasm"/>
    <property type="evidence" value="ECO:0007669"/>
    <property type="project" value="UniProtKB-SubCell"/>
</dbReference>
<dbReference type="GO" id="GO:0004648">
    <property type="term" value="F:O-phospho-L-serine:2-oxoglutarate aminotransferase activity"/>
    <property type="evidence" value="ECO:0007669"/>
    <property type="project" value="UniProtKB-UniRule"/>
</dbReference>
<dbReference type="GO" id="GO:0030170">
    <property type="term" value="F:pyridoxal phosphate binding"/>
    <property type="evidence" value="ECO:0007669"/>
    <property type="project" value="UniProtKB-UniRule"/>
</dbReference>
<dbReference type="GO" id="GO:0006564">
    <property type="term" value="P:L-serine biosynthetic process"/>
    <property type="evidence" value="ECO:0007669"/>
    <property type="project" value="UniProtKB-UniRule"/>
</dbReference>
<dbReference type="GO" id="GO:0008615">
    <property type="term" value="P:pyridoxine biosynthetic process"/>
    <property type="evidence" value="ECO:0007669"/>
    <property type="project" value="UniProtKB-UniRule"/>
</dbReference>
<dbReference type="CDD" id="cd00611">
    <property type="entry name" value="PSAT_like"/>
    <property type="match status" value="1"/>
</dbReference>
<dbReference type="FunFam" id="3.40.640.10:FF:000010">
    <property type="entry name" value="Phosphoserine aminotransferase"/>
    <property type="match status" value="1"/>
</dbReference>
<dbReference type="FunFam" id="3.90.1150.10:FF:000006">
    <property type="entry name" value="Phosphoserine aminotransferase"/>
    <property type="match status" value="1"/>
</dbReference>
<dbReference type="Gene3D" id="3.90.1150.10">
    <property type="entry name" value="Aspartate Aminotransferase, domain 1"/>
    <property type="match status" value="1"/>
</dbReference>
<dbReference type="Gene3D" id="3.40.640.10">
    <property type="entry name" value="Type I PLP-dependent aspartate aminotransferase-like (Major domain)"/>
    <property type="match status" value="1"/>
</dbReference>
<dbReference type="HAMAP" id="MF_00160">
    <property type="entry name" value="SerC_aminotrans_5"/>
    <property type="match status" value="1"/>
</dbReference>
<dbReference type="InterPro" id="IPR000192">
    <property type="entry name" value="Aminotrans_V_dom"/>
</dbReference>
<dbReference type="InterPro" id="IPR020578">
    <property type="entry name" value="Aminotrans_V_PyrdxlP_BS"/>
</dbReference>
<dbReference type="InterPro" id="IPR022278">
    <property type="entry name" value="Pser_aminoTfrase"/>
</dbReference>
<dbReference type="InterPro" id="IPR015424">
    <property type="entry name" value="PyrdxlP-dep_Trfase"/>
</dbReference>
<dbReference type="InterPro" id="IPR015421">
    <property type="entry name" value="PyrdxlP-dep_Trfase_major"/>
</dbReference>
<dbReference type="InterPro" id="IPR015422">
    <property type="entry name" value="PyrdxlP-dep_Trfase_small"/>
</dbReference>
<dbReference type="NCBIfam" id="NF003764">
    <property type="entry name" value="PRK05355.1"/>
    <property type="match status" value="1"/>
</dbReference>
<dbReference type="NCBIfam" id="TIGR01364">
    <property type="entry name" value="serC_1"/>
    <property type="match status" value="1"/>
</dbReference>
<dbReference type="PANTHER" id="PTHR43247">
    <property type="entry name" value="PHOSPHOSERINE AMINOTRANSFERASE"/>
    <property type="match status" value="1"/>
</dbReference>
<dbReference type="PANTHER" id="PTHR43247:SF1">
    <property type="entry name" value="PHOSPHOSERINE AMINOTRANSFERASE"/>
    <property type="match status" value="1"/>
</dbReference>
<dbReference type="Pfam" id="PF00266">
    <property type="entry name" value="Aminotran_5"/>
    <property type="match status" value="1"/>
</dbReference>
<dbReference type="PIRSF" id="PIRSF000525">
    <property type="entry name" value="SerC"/>
    <property type="match status" value="1"/>
</dbReference>
<dbReference type="SUPFAM" id="SSF53383">
    <property type="entry name" value="PLP-dependent transferases"/>
    <property type="match status" value="1"/>
</dbReference>
<dbReference type="PROSITE" id="PS00595">
    <property type="entry name" value="AA_TRANSFER_CLASS_5"/>
    <property type="match status" value="1"/>
</dbReference>
<proteinExistence type="inferred from homology"/>
<sequence length="362" mass="39855">MAQVFNFSSGPAMLPAEVLKLAQQELRDWHGLGTSVMEISHRGKEFIQVAEEAEQDFRDLLNIPSNYKVLFCHGGGRGQFAGVPLNLLGDKTTADYVDAGYWAASAIKEAKKYCAPQIIDAKITVDGKRAVKPMREWQLSDNAAYLHYCPNETIDGIAIDETPDFGPEVVVTADFSSTILSAPLDVSRYGVIYAGAQKNIGPAGLTLVIVREDLLGKAHESCPSILDYTVLNDNDSMFNTPPTFAWYLSGLVFKWLKAQGGVAAMHKINQQKAELLYGVIDNSDFYRNDVAQANRSRMNVPFQLADNALDKVFLEESFAAGLHALKGHRVVGGMRASIYNAMPIEGVKALTDFMIDFERRHG</sequence>
<protein>
    <recommendedName>
        <fullName evidence="1">Phosphoserine aminotransferase</fullName>
        <ecNumber evidence="1">2.6.1.52</ecNumber>
    </recommendedName>
    <alternativeName>
        <fullName evidence="1">Phosphohydroxythreonine aminotransferase</fullName>
        <shortName evidence="1">PSAT</shortName>
    </alternativeName>
</protein>
<organism>
    <name type="scientific">Salmonella gallinarum</name>
    <dbReference type="NCBI Taxonomy" id="594"/>
    <lineage>
        <taxon>Bacteria</taxon>
        <taxon>Pseudomonadati</taxon>
        <taxon>Pseudomonadota</taxon>
        <taxon>Gammaproteobacteria</taxon>
        <taxon>Enterobacterales</taxon>
        <taxon>Enterobacteriaceae</taxon>
        <taxon>Salmonella</taxon>
    </lineage>
</organism>
<accession>P62676</accession>
<accession>P17902</accession>
<gene>
    <name evidence="1" type="primary">serC</name>
</gene>
<evidence type="ECO:0000255" key="1">
    <source>
        <dbReference type="HAMAP-Rule" id="MF_00160"/>
    </source>
</evidence>
<feature type="chain" id="PRO_0000150205" description="Phosphoserine aminotransferase">
    <location>
        <begin position="1"/>
        <end position="362"/>
    </location>
</feature>
<feature type="binding site" evidence="1">
    <location>
        <position position="9"/>
    </location>
    <ligand>
        <name>L-glutamate</name>
        <dbReference type="ChEBI" id="CHEBI:29985"/>
    </ligand>
</feature>
<feature type="binding site" evidence="1">
    <location>
        <position position="42"/>
    </location>
    <ligand>
        <name>L-glutamate</name>
        <dbReference type="ChEBI" id="CHEBI:29985"/>
    </ligand>
</feature>
<feature type="binding site" evidence="1">
    <location>
        <begin position="76"/>
        <end position="77"/>
    </location>
    <ligand>
        <name>pyridoxal 5'-phosphate</name>
        <dbReference type="ChEBI" id="CHEBI:597326"/>
    </ligand>
</feature>
<feature type="binding site" evidence="1">
    <location>
        <position position="102"/>
    </location>
    <ligand>
        <name>pyridoxal 5'-phosphate</name>
        <dbReference type="ChEBI" id="CHEBI:597326"/>
    </ligand>
</feature>
<feature type="binding site" evidence="1">
    <location>
        <position position="153"/>
    </location>
    <ligand>
        <name>pyridoxal 5'-phosphate</name>
        <dbReference type="ChEBI" id="CHEBI:597326"/>
    </ligand>
</feature>
<feature type="binding site" evidence="1">
    <location>
        <position position="174"/>
    </location>
    <ligand>
        <name>pyridoxal 5'-phosphate</name>
        <dbReference type="ChEBI" id="CHEBI:597326"/>
    </ligand>
</feature>
<feature type="binding site" evidence="1">
    <location>
        <position position="197"/>
    </location>
    <ligand>
        <name>pyridoxal 5'-phosphate</name>
        <dbReference type="ChEBI" id="CHEBI:597326"/>
    </ligand>
</feature>
<feature type="binding site" evidence="1">
    <location>
        <begin position="239"/>
        <end position="240"/>
    </location>
    <ligand>
        <name>pyridoxal 5'-phosphate</name>
        <dbReference type="ChEBI" id="CHEBI:597326"/>
    </ligand>
</feature>
<feature type="modified residue" description="N6-(pyridoxal phosphate)lysine" evidence="1">
    <location>
        <position position="198"/>
    </location>
</feature>
<keyword id="KW-0028">Amino-acid biosynthesis</keyword>
<keyword id="KW-0032">Aminotransferase</keyword>
<keyword id="KW-0963">Cytoplasm</keyword>
<keyword id="KW-0663">Pyridoxal phosphate</keyword>
<keyword id="KW-0664">Pyridoxine biosynthesis</keyword>
<keyword id="KW-0718">Serine biosynthesis</keyword>
<keyword id="KW-0808">Transferase</keyword>
<name>SERC_SALGL</name>